<comment type="function">
    <text evidence="1">May target protein phosphatase 1 to F-actin cytoskeleton.</text>
</comment>
<comment type="subunit">
    <text evidence="1">Interacts with Protein phosphatase 1 (PP1).</text>
</comment>
<comment type="subcellular location">
    <subcellularLocation>
        <location evidence="1">Cytoplasm</location>
        <location evidence="1">Cytoskeleton</location>
    </subcellularLocation>
</comment>
<comment type="alternative products">
    <event type="alternative splicing"/>
    <isoform>
        <id>Q8BQ30-1</id>
        <name>1</name>
        <sequence type="displayed"/>
    </isoform>
    <isoform>
        <id>Q8BQ30-2</id>
        <name>2</name>
        <sequence type="described" ref="VSP_014260"/>
    </isoform>
</comment>
<comment type="sequence caution" evidence="5">
    <conflict type="erroneous initiation">
        <sequence resource="EMBL-CDS" id="AAH25573"/>
    </conflict>
    <text>Extended N-terminus.</text>
</comment>
<organism>
    <name type="scientific">Mus musculus</name>
    <name type="common">Mouse</name>
    <dbReference type="NCBI Taxonomy" id="10090"/>
    <lineage>
        <taxon>Eukaryota</taxon>
        <taxon>Metazoa</taxon>
        <taxon>Chordata</taxon>
        <taxon>Craniata</taxon>
        <taxon>Vertebrata</taxon>
        <taxon>Euteleostomi</taxon>
        <taxon>Mammalia</taxon>
        <taxon>Eutheria</taxon>
        <taxon>Euarchontoglires</taxon>
        <taxon>Glires</taxon>
        <taxon>Rodentia</taxon>
        <taxon>Myomorpha</taxon>
        <taxon>Muroidea</taxon>
        <taxon>Muridae</taxon>
        <taxon>Murinae</taxon>
        <taxon>Mus</taxon>
        <taxon>Mus</taxon>
    </lineage>
</organism>
<gene>
    <name type="primary">Ppp1r18</name>
</gene>
<protein>
    <recommendedName>
        <fullName>Phostensin</fullName>
    </recommendedName>
    <alternativeName>
        <fullName>Protein phosphatase 1 F-actin cytoskeleton-targeting subunit</fullName>
    </alternativeName>
    <alternativeName>
        <fullName>Protein phosphatase 1 regulatory subunit 18</fullName>
    </alternativeName>
</protein>
<dbReference type="EMBL" id="AK009340">
    <property type="protein sequence ID" value="BAC25252.1"/>
    <property type="molecule type" value="mRNA"/>
</dbReference>
<dbReference type="EMBL" id="AK051656">
    <property type="protein sequence ID" value="BAC34706.1"/>
    <property type="molecule type" value="mRNA"/>
</dbReference>
<dbReference type="EMBL" id="AK149943">
    <property type="protein sequence ID" value="BAE29185.1"/>
    <property type="molecule type" value="mRNA"/>
</dbReference>
<dbReference type="EMBL" id="CR974451">
    <property type="status" value="NOT_ANNOTATED_CDS"/>
    <property type="molecule type" value="Genomic_DNA"/>
</dbReference>
<dbReference type="EMBL" id="BC025573">
    <property type="protein sequence ID" value="AAH25573.1"/>
    <property type="status" value="ALT_INIT"/>
    <property type="molecule type" value="mRNA"/>
</dbReference>
<dbReference type="CCDS" id="CCDS50094.1">
    <molecule id="Q8BQ30-1"/>
</dbReference>
<dbReference type="RefSeq" id="NP_001140182.1">
    <molecule id="Q8BQ30-1"/>
    <property type="nucleotide sequence ID" value="NM_001146710.1"/>
</dbReference>
<dbReference type="RefSeq" id="NP_001140183.1">
    <molecule id="Q8BQ30-1"/>
    <property type="nucleotide sequence ID" value="NM_001146711.1"/>
</dbReference>
<dbReference type="RefSeq" id="NP_780451.1">
    <molecule id="Q8BQ30-1"/>
    <property type="nucleotide sequence ID" value="NM_175242.1"/>
</dbReference>
<dbReference type="RefSeq" id="XP_006525155.2">
    <molecule id="Q8BQ30-2"/>
    <property type="nucleotide sequence ID" value="XM_006525092.5"/>
</dbReference>
<dbReference type="SMR" id="Q8BQ30"/>
<dbReference type="BioGRID" id="218132">
    <property type="interactions" value="12"/>
</dbReference>
<dbReference type="FunCoup" id="Q8BQ30">
    <property type="interactions" value="75"/>
</dbReference>
<dbReference type="IntAct" id="Q8BQ30">
    <property type="interactions" value="3"/>
</dbReference>
<dbReference type="STRING" id="10090.ENSMUSP00000141094"/>
<dbReference type="GlyGen" id="Q8BQ30">
    <property type="glycosylation" value="2 sites, 1 O-linked glycan (1 site)"/>
</dbReference>
<dbReference type="iPTMnet" id="Q8BQ30"/>
<dbReference type="PhosphoSitePlus" id="Q8BQ30"/>
<dbReference type="jPOST" id="Q8BQ30"/>
<dbReference type="PaxDb" id="10090-ENSMUSP00000109445"/>
<dbReference type="PeptideAtlas" id="Q8BQ30"/>
<dbReference type="ProteomicsDB" id="289384">
    <molecule id="Q8BQ30-1"/>
</dbReference>
<dbReference type="ProteomicsDB" id="289385">
    <molecule id="Q8BQ30-2"/>
</dbReference>
<dbReference type="Pumba" id="Q8BQ30"/>
<dbReference type="Antibodypedia" id="55922">
    <property type="antibodies" value="129 antibodies from 25 providers"/>
</dbReference>
<dbReference type="Ensembl" id="ENSMUST00000113814.11">
    <molecule id="Q8BQ30-1"/>
    <property type="protein sequence ID" value="ENSMUSP00000109445.5"/>
    <property type="gene ID" value="ENSMUSG00000034595.18"/>
</dbReference>
<dbReference type="Ensembl" id="ENSMUST00000122899.8">
    <molecule id="Q8BQ30-1"/>
    <property type="protein sequence ID" value="ENSMUSP00000120343.2"/>
    <property type="gene ID" value="ENSMUSG00000034595.18"/>
</dbReference>
<dbReference type="Ensembl" id="ENSMUST00000127442.8">
    <molecule id="Q8BQ30-2"/>
    <property type="protein sequence ID" value="ENSMUSP00000115753.2"/>
    <property type="gene ID" value="ENSMUSG00000034595.18"/>
</dbReference>
<dbReference type="Ensembl" id="ENSMUST00000144382.8">
    <molecule id="Q8BQ30-1"/>
    <property type="protein sequence ID" value="ENSMUSP00000116100.2"/>
    <property type="gene ID" value="ENSMUSG00000034595.18"/>
</dbReference>
<dbReference type="Ensembl" id="ENSMUST00000187690.7">
    <molecule id="Q8BQ30-1"/>
    <property type="protein sequence ID" value="ENSMUSP00000141094.2"/>
    <property type="gene ID" value="ENSMUSG00000034595.18"/>
</dbReference>
<dbReference type="GeneID" id="76448"/>
<dbReference type="KEGG" id="mmu:76448"/>
<dbReference type="UCSC" id="uc008cit.2">
    <molecule id="Q8BQ30-2"/>
    <property type="organism name" value="mouse"/>
</dbReference>
<dbReference type="UCSC" id="uc008ciu.2">
    <molecule id="Q8BQ30-1"/>
    <property type="organism name" value="mouse"/>
</dbReference>
<dbReference type="AGR" id="MGI:1923698"/>
<dbReference type="CTD" id="170954"/>
<dbReference type="MGI" id="MGI:1923698">
    <property type="gene designation" value="Ppp1r18"/>
</dbReference>
<dbReference type="VEuPathDB" id="HostDB:ENSMUSG00000034595"/>
<dbReference type="eggNOG" id="ENOG502RY8Q">
    <property type="taxonomic scope" value="Eukaryota"/>
</dbReference>
<dbReference type="GeneTree" id="ENSGT00530000064035"/>
<dbReference type="HOGENOM" id="CLU_019218_0_0_1"/>
<dbReference type="InParanoid" id="Q8BQ30"/>
<dbReference type="OMA" id="PGETPEW"/>
<dbReference type="PhylomeDB" id="Q8BQ30"/>
<dbReference type="TreeFam" id="TF337604"/>
<dbReference type="BioGRID-ORCS" id="76448">
    <property type="hits" value="7 hits in 77 CRISPR screens"/>
</dbReference>
<dbReference type="ChiTaRS" id="Ppp1r18">
    <property type="organism name" value="mouse"/>
</dbReference>
<dbReference type="PRO" id="PR:Q8BQ30"/>
<dbReference type="Proteomes" id="UP000000589">
    <property type="component" value="Chromosome 17"/>
</dbReference>
<dbReference type="RNAct" id="Q8BQ30">
    <property type="molecule type" value="protein"/>
</dbReference>
<dbReference type="Bgee" id="ENSMUSG00000034595">
    <property type="expression patterns" value="Expressed in granulocyte and 252 other cell types or tissues"/>
</dbReference>
<dbReference type="ExpressionAtlas" id="Q8BQ30">
    <property type="expression patterns" value="baseline and differential"/>
</dbReference>
<dbReference type="GO" id="GO:0005737">
    <property type="term" value="C:cytoplasm"/>
    <property type="evidence" value="ECO:0007669"/>
    <property type="project" value="UniProtKB-KW"/>
</dbReference>
<dbReference type="GO" id="GO:0005856">
    <property type="term" value="C:cytoskeleton"/>
    <property type="evidence" value="ECO:0007669"/>
    <property type="project" value="UniProtKB-SubCell"/>
</dbReference>
<dbReference type="GO" id="GO:0003779">
    <property type="term" value="F:actin binding"/>
    <property type="evidence" value="ECO:0007669"/>
    <property type="project" value="UniProtKB-KW"/>
</dbReference>
<dbReference type="GO" id="GO:0019902">
    <property type="term" value="F:phosphatase binding"/>
    <property type="evidence" value="ECO:0007669"/>
    <property type="project" value="InterPro"/>
</dbReference>
<dbReference type="InterPro" id="IPR025903">
    <property type="entry name" value="Phostensin/Taperin_N_dom"/>
</dbReference>
<dbReference type="InterPro" id="IPR025907">
    <property type="entry name" value="Phostensin/Taperin_PP1-bd_dom"/>
</dbReference>
<dbReference type="InterPro" id="IPR026671">
    <property type="entry name" value="PPP1R18/Tprn"/>
</dbReference>
<dbReference type="PANTHER" id="PTHR21685:SF0">
    <property type="entry name" value="PHOSTENSIN"/>
    <property type="match status" value="1"/>
</dbReference>
<dbReference type="PANTHER" id="PTHR21685">
    <property type="entry name" value="TON-B BOX DOMAIN"/>
    <property type="match status" value="1"/>
</dbReference>
<dbReference type="Pfam" id="PF13914">
    <property type="entry name" value="Phostensin"/>
    <property type="match status" value="1"/>
</dbReference>
<dbReference type="Pfam" id="PF13916">
    <property type="entry name" value="Phostensin_N"/>
    <property type="match status" value="1"/>
</dbReference>
<sequence>MTAIPDWKLQLLARRRQEEAAVRGREKAERDRLSQMPAWKRGILERRRAKLGLPPGEGSPVPGNAEAGPPDPDESAVLLEAIGPVHQNRFIQQERQRQQQQQQQQRNEVLGDRKAGPLEVLERRSSPGNLRDQSPKGRESREERLSPRESRDRRLVIGGAQESSSRSLRDWRQSPAEARDLSSRPAEAQKWRLSPGETPEESLRLAGSGDDSPKRKEVLESILSPGEPGDQKASPTDVHKWNLDSREPQKQSLIQLEATEWRLKSGEERKDYLEGCGREEEKLSSGIVPVTKEVQDITSSEVETAEQRPTESWKWTLNSGKARERTTWDIDTQTQKPDPPASSEKHPGPSGMEAEEEAEKEEAEAQSRPLRAQQNLCSGPSPLPPEHSGTEGSRQQEEEAAEPRPPTPAPLSPPPSAPTAPQPSGDPLMSRLFYGVKPGPGVGAPRRSGHTFTVNPRRCAPPASPAPPVNPATADAAGSGSGKKRYPTAEEILVLGGYLRLSRSCLVKGSPERHHKQLKISFSETALETTYQYPSESSVLEDLGPEPETPIAPLATQPDEEEEEEEEEEELLLQPGLQGGLRTKALIVDESCRR</sequence>
<name>PPR18_MOUSE</name>
<proteinExistence type="evidence at protein level"/>
<accession>Q8BQ30</accession>
<accession>B8JJ63</accession>
<accession>B8JJ64</accession>
<accession>Q3UDS6</accession>
<accession>Q8CEY9</accession>
<accession>Q8R3D8</accession>
<feature type="chain" id="PRO_0000050809" description="Phostensin">
    <location>
        <begin position="1"/>
        <end position="594"/>
    </location>
</feature>
<feature type="region of interest" description="Disordered" evidence="3">
    <location>
        <begin position="18"/>
        <end position="238"/>
    </location>
</feature>
<feature type="region of interest" description="Disordered" evidence="3">
    <location>
        <begin position="294"/>
        <end position="485"/>
    </location>
</feature>
<feature type="region of interest" description="Disordered" evidence="3">
    <location>
        <begin position="531"/>
        <end position="577"/>
    </location>
</feature>
<feature type="compositionally biased region" description="Basic and acidic residues" evidence="3">
    <location>
        <begin position="18"/>
        <end position="33"/>
    </location>
</feature>
<feature type="compositionally biased region" description="Basic and acidic residues" evidence="3">
    <location>
        <begin position="109"/>
        <end position="125"/>
    </location>
</feature>
<feature type="compositionally biased region" description="Basic and acidic residues" evidence="3">
    <location>
        <begin position="133"/>
        <end position="155"/>
    </location>
</feature>
<feature type="compositionally biased region" description="Basic and acidic residues" evidence="3">
    <location>
        <begin position="167"/>
        <end position="190"/>
    </location>
</feature>
<feature type="compositionally biased region" description="Acidic residues" evidence="3">
    <location>
        <begin position="353"/>
        <end position="364"/>
    </location>
</feature>
<feature type="compositionally biased region" description="Pro residues" evidence="3">
    <location>
        <begin position="403"/>
        <end position="421"/>
    </location>
</feature>
<feature type="compositionally biased region" description="Acidic residues" evidence="3">
    <location>
        <begin position="558"/>
        <end position="571"/>
    </location>
</feature>
<feature type="modified residue" description="Phosphoserine" evidence="2">
    <location>
        <position position="126"/>
    </location>
</feature>
<feature type="modified residue" description="Phosphoserine" evidence="2">
    <location>
        <position position="134"/>
    </location>
</feature>
<feature type="modified residue" description="Phosphoserine" evidence="2">
    <location>
        <position position="174"/>
    </location>
</feature>
<feature type="modified residue" description="Phosphoserine" evidence="6 7">
    <location>
        <position position="194"/>
    </location>
</feature>
<feature type="modified residue" description="Phosphothreonine" evidence="2">
    <location>
        <position position="198"/>
    </location>
</feature>
<feature type="modified residue" description="Phosphoserine" evidence="2">
    <location>
        <position position="224"/>
    </location>
</feature>
<feature type="modified residue" description="Phosphoserine" evidence="6">
    <location>
        <position position="412"/>
    </location>
</feature>
<feature type="modified residue" description="N6-acetyllysine" evidence="8">
    <location>
        <position position="437"/>
    </location>
</feature>
<feature type="modified residue" description="Phosphoserine" evidence="7">
    <location>
        <position position="510"/>
    </location>
</feature>
<feature type="splice variant" id="VSP_014260" description="In isoform 2." evidence="4">
    <original>DESCRR</original>
    <variation>GKRLRPGWRRAPPGVCGVVVL</variation>
    <location>
        <begin position="589"/>
        <end position="594"/>
    </location>
</feature>
<feature type="sequence conflict" description="In Ref. 3; AAH25573." evidence="5" ref="3">
    <original>R</original>
    <variation>I</variation>
    <location>
        <position position="278"/>
    </location>
</feature>
<evidence type="ECO:0000250" key="1"/>
<evidence type="ECO:0000250" key="2">
    <source>
        <dbReference type="UniProtKB" id="Q6NYC8"/>
    </source>
</evidence>
<evidence type="ECO:0000256" key="3">
    <source>
        <dbReference type="SAM" id="MobiDB-lite"/>
    </source>
</evidence>
<evidence type="ECO:0000303" key="4">
    <source>
    </source>
</evidence>
<evidence type="ECO:0000305" key="5"/>
<evidence type="ECO:0007744" key="6">
    <source>
    </source>
</evidence>
<evidence type="ECO:0007744" key="7">
    <source>
    </source>
</evidence>
<evidence type="ECO:0007744" key="8">
    <source>
    </source>
</evidence>
<keyword id="KW-0007">Acetylation</keyword>
<keyword id="KW-0009">Actin-binding</keyword>
<keyword id="KW-0025">Alternative splicing</keyword>
<keyword id="KW-0963">Cytoplasm</keyword>
<keyword id="KW-0206">Cytoskeleton</keyword>
<keyword id="KW-0597">Phosphoprotein</keyword>
<keyword id="KW-1185">Reference proteome</keyword>
<reference key="1">
    <citation type="journal article" date="2005" name="Science">
        <title>The transcriptional landscape of the mammalian genome.</title>
        <authorList>
            <person name="Carninci P."/>
            <person name="Kasukawa T."/>
            <person name="Katayama S."/>
            <person name="Gough J."/>
            <person name="Frith M.C."/>
            <person name="Maeda N."/>
            <person name="Oyama R."/>
            <person name="Ravasi T."/>
            <person name="Lenhard B."/>
            <person name="Wells C."/>
            <person name="Kodzius R."/>
            <person name="Shimokawa K."/>
            <person name="Bajic V.B."/>
            <person name="Brenner S.E."/>
            <person name="Batalov S."/>
            <person name="Forrest A.R."/>
            <person name="Zavolan M."/>
            <person name="Davis M.J."/>
            <person name="Wilming L.G."/>
            <person name="Aidinis V."/>
            <person name="Allen J.E."/>
            <person name="Ambesi-Impiombato A."/>
            <person name="Apweiler R."/>
            <person name="Aturaliya R.N."/>
            <person name="Bailey T.L."/>
            <person name="Bansal M."/>
            <person name="Baxter L."/>
            <person name="Beisel K.W."/>
            <person name="Bersano T."/>
            <person name="Bono H."/>
            <person name="Chalk A.M."/>
            <person name="Chiu K.P."/>
            <person name="Choudhary V."/>
            <person name="Christoffels A."/>
            <person name="Clutterbuck D.R."/>
            <person name="Crowe M.L."/>
            <person name="Dalla E."/>
            <person name="Dalrymple B.P."/>
            <person name="de Bono B."/>
            <person name="Della Gatta G."/>
            <person name="di Bernardo D."/>
            <person name="Down T."/>
            <person name="Engstrom P."/>
            <person name="Fagiolini M."/>
            <person name="Faulkner G."/>
            <person name="Fletcher C.F."/>
            <person name="Fukushima T."/>
            <person name="Furuno M."/>
            <person name="Futaki S."/>
            <person name="Gariboldi M."/>
            <person name="Georgii-Hemming P."/>
            <person name="Gingeras T.R."/>
            <person name="Gojobori T."/>
            <person name="Green R.E."/>
            <person name="Gustincich S."/>
            <person name="Harbers M."/>
            <person name="Hayashi Y."/>
            <person name="Hensch T.K."/>
            <person name="Hirokawa N."/>
            <person name="Hill D."/>
            <person name="Huminiecki L."/>
            <person name="Iacono M."/>
            <person name="Ikeo K."/>
            <person name="Iwama A."/>
            <person name="Ishikawa T."/>
            <person name="Jakt M."/>
            <person name="Kanapin A."/>
            <person name="Katoh M."/>
            <person name="Kawasawa Y."/>
            <person name="Kelso J."/>
            <person name="Kitamura H."/>
            <person name="Kitano H."/>
            <person name="Kollias G."/>
            <person name="Krishnan S.P."/>
            <person name="Kruger A."/>
            <person name="Kummerfeld S.K."/>
            <person name="Kurochkin I.V."/>
            <person name="Lareau L.F."/>
            <person name="Lazarevic D."/>
            <person name="Lipovich L."/>
            <person name="Liu J."/>
            <person name="Liuni S."/>
            <person name="McWilliam S."/>
            <person name="Madan Babu M."/>
            <person name="Madera M."/>
            <person name="Marchionni L."/>
            <person name="Matsuda H."/>
            <person name="Matsuzawa S."/>
            <person name="Miki H."/>
            <person name="Mignone F."/>
            <person name="Miyake S."/>
            <person name="Morris K."/>
            <person name="Mottagui-Tabar S."/>
            <person name="Mulder N."/>
            <person name="Nakano N."/>
            <person name="Nakauchi H."/>
            <person name="Ng P."/>
            <person name="Nilsson R."/>
            <person name="Nishiguchi S."/>
            <person name="Nishikawa S."/>
            <person name="Nori F."/>
            <person name="Ohara O."/>
            <person name="Okazaki Y."/>
            <person name="Orlando V."/>
            <person name="Pang K.C."/>
            <person name="Pavan W.J."/>
            <person name="Pavesi G."/>
            <person name="Pesole G."/>
            <person name="Petrovsky N."/>
            <person name="Piazza S."/>
            <person name="Reed J."/>
            <person name="Reid J.F."/>
            <person name="Ring B.Z."/>
            <person name="Ringwald M."/>
            <person name="Rost B."/>
            <person name="Ruan Y."/>
            <person name="Salzberg S.L."/>
            <person name="Sandelin A."/>
            <person name="Schneider C."/>
            <person name="Schoenbach C."/>
            <person name="Sekiguchi K."/>
            <person name="Semple C.A."/>
            <person name="Seno S."/>
            <person name="Sessa L."/>
            <person name="Sheng Y."/>
            <person name="Shibata Y."/>
            <person name="Shimada H."/>
            <person name="Shimada K."/>
            <person name="Silva D."/>
            <person name="Sinclair B."/>
            <person name="Sperling S."/>
            <person name="Stupka E."/>
            <person name="Sugiura K."/>
            <person name="Sultana R."/>
            <person name="Takenaka Y."/>
            <person name="Taki K."/>
            <person name="Tammoja K."/>
            <person name="Tan S.L."/>
            <person name="Tang S."/>
            <person name="Taylor M.S."/>
            <person name="Tegner J."/>
            <person name="Teichmann S.A."/>
            <person name="Ueda H.R."/>
            <person name="van Nimwegen E."/>
            <person name="Verardo R."/>
            <person name="Wei C.L."/>
            <person name="Yagi K."/>
            <person name="Yamanishi H."/>
            <person name="Zabarovsky E."/>
            <person name="Zhu S."/>
            <person name="Zimmer A."/>
            <person name="Hide W."/>
            <person name="Bult C."/>
            <person name="Grimmond S.M."/>
            <person name="Teasdale R.D."/>
            <person name="Liu E.T."/>
            <person name="Brusic V."/>
            <person name="Quackenbush J."/>
            <person name="Wahlestedt C."/>
            <person name="Mattick J.S."/>
            <person name="Hume D.A."/>
            <person name="Kai C."/>
            <person name="Sasaki D."/>
            <person name="Tomaru Y."/>
            <person name="Fukuda S."/>
            <person name="Kanamori-Katayama M."/>
            <person name="Suzuki M."/>
            <person name="Aoki J."/>
            <person name="Arakawa T."/>
            <person name="Iida J."/>
            <person name="Imamura K."/>
            <person name="Itoh M."/>
            <person name="Kato T."/>
            <person name="Kawaji H."/>
            <person name="Kawagashira N."/>
            <person name="Kawashima T."/>
            <person name="Kojima M."/>
            <person name="Kondo S."/>
            <person name="Konno H."/>
            <person name="Nakano K."/>
            <person name="Ninomiya N."/>
            <person name="Nishio T."/>
            <person name="Okada M."/>
            <person name="Plessy C."/>
            <person name="Shibata K."/>
            <person name="Shiraki T."/>
            <person name="Suzuki S."/>
            <person name="Tagami M."/>
            <person name="Waki K."/>
            <person name="Watahiki A."/>
            <person name="Okamura-Oho Y."/>
            <person name="Suzuki H."/>
            <person name="Kawai J."/>
            <person name="Hayashizaki Y."/>
        </authorList>
    </citation>
    <scope>NUCLEOTIDE SEQUENCE [LARGE SCALE MRNA] (ISOFORM 1)</scope>
    <source>
        <strain>C57BL/6J</strain>
        <tissue>Bone marrow</tissue>
        <tissue>Spinal ganglion</tissue>
        <tissue>Tongue</tissue>
    </source>
</reference>
<reference key="2">
    <citation type="journal article" date="2009" name="PLoS Biol.">
        <title>Lineage-specific biology revealed by a finished genome assembly of the mouse.</title>
        <authorList>
            <person name="Church D.M."/>
            <person name="Goodstadt L."/>
            <person name="Hillier L.W."/>
            <person name="Zody M.C."/>
            <person name="Goldstein S."/>
            <person name="She X."/>
            <person name="Bult C.J."/>
            <person name="Agarwala R."/>
            <person name="Cherry J.L."/>
            <person name="DiCuccio M."/>
            <person name="Hlavina W."/>
            <person name="Kapustin Y."/>
            <person name="Meric P."/>
            <person name="Maglott D."/>
            <person name="Birtle Z."/>
            <person name="Marques A.C."/>
            <person name="Graves T."/>
            <person name="Zhou S."/>
            <person name="Teague B."/>
            <person name="Potamousis K."/>
            <person name="Churas C."/>
            <person name="Place M."/>
            <person name="Herschleb J."/>
            <person name="Runnheim R."/>
            <person name="Forrest D."/>
            <person name="Amos-Landgraf J."/>
            <person name="Schwartz D.C."/>
            <person name="Cheng Z."/>
            <person name="Lindblad-Toh K."/>
            <person name="Eichler E.E."/>
            <person name="Ponting C.P."/>
        </authorList>
    </citation>
    <scope>NUCLEOTIDE SEQUENCE [LARGE SCALE GENOMIC DNA]</scope>
    <source>
        <strain>C57BL/6J</strain>
    </source>
</reference>
<reference key="3">
    <citation type="journal article" date="2004" name="Genome Res.">
        <title>The status, quality, and expansion of the NIH full-length cDNA project: the Mammalian Gene Collection (MGC).</title>
        <authorList>
            <consortium name="The MGC Project Team"/>
        </authorList>
    </citation>
    <scope>NUCLEOTIDE SEQUENCE [LARGE SCALE MRNA] (ISOFORM 2)</scope>
    <source>
        <strain>FVB/N</strain>
        <tissue>Mammary gland</tissue>
    </source>
</reference>
<reference key="4">
    <citation type="journal article" date="2009" name="Immunity">
        <title>The phagosomal proteome in interferon-gamma-activated macrophages.</title>
        <authorList>
            <person name="Trost M."/>
            <person name="English L."/>
            <person name="Lemieux S."/>
            <person name="Courcelles M."/>
            <person name="Desjardins M."/>
            <person name="Thibault P."/>
        </authorList>
    </citation>
    <scope>PHOSPHORYLATION [LARGE SCALE ANALYSIS] AT SER-194 AND SER-412</scope>
    <scope>IDENTIFICATION BY MASS SPECTROMETRY [LARGE SCALE ANALYSIS]</scope>
</reference>
<reference key="5">
    <citation type="journal article" date="2010" name="Cell">
        <title>A tissue-specific atlas of mouse protein phosphorylation and expression.</title>
        <authorList>
            <person name="Huttlin E.L."/>
            <person name="Jedrychowski M.P."/>
            <person name="Elias J.E."/>
            <person name="Goswami T."/>
            <person name="Rad R."/>
            <person name="Beausoleil S.A."/>
            <person name="Villen J."/>
            <person name="Haas W."/>
            <person name="Sowa M.E."/>
            <person name="Gygi S.P."/>
        </authorList>
    </citation>
    <scope>PHOSPHORYLATION [LARGE SCALE ANALYSIS] AT SER-194 AND SER-510</scope>
    <scope>IDENTIFICATION BY MASS SPECTROMETRY [LARGE SCALE ANALYSIS]</scope>
    <source>
        <tissue>Brown adipose tissue</tissue>
        <tissue>Heart</tissue>
        <tissue>Kidney</tissue>
        <tissue>Lung</tissue>
        <tissue>Spleen</tissue>
    </source>
</reference>
<reference key="6">
    <citation type="journal article" date="2013" name="Mol. Cell">
        <title>SIRT5-mediated lysine desuccinylation impacts diverse metabolic pathways.</title>
        <authorList>
            <person name="Park J."/>
            <person name="Chen Y."/>
            <person name="Tishkoff D.X."/>
            <person name="Peng C."/>
            <person name="Tan M."/>
            <person name="Dai L."/>
            <person name="Xie Z."/>
            <person name="Zhang Y."/>
            <person name="Zwaans B.M."/>
            <person name="Skinner M.E."/>
            <person name="Lombard D.B."/>
            <person name="Zhao Y."/>
        </authorList>
    </citation>
    <scope>ACETYLATION [LARGE SCALE ANALYSIS] AT LYS-437</scope>
    <scope>IDENTIFICATION BY MASS SPECTROMETRY [LARGE SCALE ANALYSIS]</scope>
    <source>
        <tissue>Embryonic fibroblast</tissue>
    </source>
</reference>